<keyword id="KW-1185">Reference proteome</keyword>
<organism>
    <name type="scientific">Pseudoalteromonas translucida (strain TAC 125)</name>
    <dbReference type="NCBI Taxonomy" id="326442"/>
    <lineage>
        <taxon>Bacteria</taxon>
        <taxon>Pseudomonadati</taxon>
        <taxon>Pseudomonadota</taxon>
        <taxon>Gammaproteobacteria</taxon>
        <taxon>Alteromonadales</taxon>
        <taxon>Pseudoalteromonadaceae</taxon>
        <taxon>Pseudoalteromonas</taxon>
    </lineage>
</organism>
<evidence type="ECO:0000255" key="1">
    <source>
        <dbReference type="HAMAP-Rule" id="MF_00758"/>
    </source>
</evidence>
<name>Y2600_PSET1</name>
<feature type="chain" id="PRO_0000258855" description="UPF0301 protein PSHAa2600">
    <location>
        <begin position="1"/>
        <end position="185"/>
    </location>
</feature>
<accession>Q3IFA1</accession>
<comment type="similarity">
    <text evidence="1">Belongs to the UPF0301 (AlgH) family.</text>
</comment>
<gene>
    <name type="ordered locus">PSHAa2600</name>
</gene>
<proteinExistence type="inferred from homology"/>
<protein>
    <recommendedName>
        <fullName evidence="1">UPF0301 protein PSHAa2600</fullName>
    </recommendedName>
</protein>
<reference key="1">
    <citation type="journal article" date="2005" name="Genome Res.">
        <title>Coping with cold: the genome of the versatile marine Antarctica bacterium Pseudoalteromonas haloplanktis TAC125.</title>
        <authorList>
            <person name="Medigue C."/>
            <person name="Krin E."/>
            <person name="Pascal G."/>
            <person name="Barbe V."/>
            <person name="Bernsel A."/>
            <person name="Bertin P.N."/>
            <person name="Cheung F."/>
            <person name="Cruveiller S."/>
            <person name="D'Amico S."/>
            <person name="Duilio A."/>
            <person name="Fang G."/>
            <person name="Feller G."/>
            <person name="Ho C."/>
            <person name="Mangenot S."/>
            <person name="Marino G."/>
            <person name="Nilsson J."/>
            <person name="Parrilli E."/>
            <person name="Rocha E.P.C."/>
            <person name="Rouy Z."/>
            <person name="Sekowska A."/>
            <person name="Tutino M.L."/>
            <person name="Vallenet D."/>
            <person name="von Heijne G."/>
            <person name="Danchin A."/>
        </authorList>
    </citation>
    <scope>NUCLEOTIDE SEQUENCE [LARGE SCALE GENOMIC DNA]</scope>
    <source>
        <strain>TAC 125</strain>
    </source>
</reference>
<sequence length="185" mass="20421">MQSLENHFLIAMPSMQDPFFKRAVTYICEHNEDGAMGLVINQPINITVGELLDKIEIDNDKTQQAAQVSVYAGGPVKTDRGFVLHSPKHGYSASQALSSDIMITTSKDVLASLTTAQAPEQFIITLGYSGWEQGQLEQELLDNSWLIIKADPKIIFDTPVEKRWEKAVSMLGFDISQLSPEAGHA</sequence>
<dbReference type="EMBL" id="CR954246">
    <property type="protein sequence ID" value="CAI87648.1"/>
    <property type="molecule type" value="Genomic_DNA"/>
</dbReference>
<dbReference type="SMR" id="Q3IFA1"/>
<dbReference type="STRING" id="326442.PSHAa2600"/>
<dbReference type="KEGG" id="pha:PSHAa2600"/>
<dbReference type="PATRIC" id="fig|326442.8.peg.2510"/>
<dbReference type="eggNOG" id="COG1678">
    <property type="taxonomic scope" value="Bacteria"/>
</dbReference>
<dbReference type="HOGENOM" id="CLU_057596_1_0_6"/>
<dbReference type="BioCyc" id="PHAL326442:PSHA_RS12800-MONOMER"/>
<dbReference type="Proteomes" id="UP000006843">
    <property type="component" value="Chromosome I"/>
</dbReference>
<dbReference type="GO" id="GO:0005829">
    <property type="term" value="C:cytosol"/>
    <property type="evidence" value="ECO:0007669"/>
    <property type="project" value="TreeGrafter"/>
</dbReference>
<dbReference type="Gene3D" id="3.40.1740.10">
    <property type="entry name" value="VC0467-like"/>
    <property type="match status" value="1"/>
</dbReference>
<dbReference type="HAMAP" id="MF_00758">
    <property type="entry name" value="UPF0301"/>
    <property type="match status" value="1"/>
</dbReference>
<dbReference type="InterPro" id="IPR003774">
    <property type="entry name" value="AlgH-like"/>
</dbReference>
<dbReference type="NCBIfam" id="NF001266">
    <property type="entry name" value="PRK00228.1-1"/>
    <property type="match status" value="1"/>
</dbReference>
<dbReference type="PANTHER" id="PTHR30327">
    <property type="entry name" value="UNCHARACTERIZED PROTEIN YQGE"/>
    <property type="match status" value="1"/>
</dbReference>
<dbReference type="PANTHER" id="PTHR30327:SF1">
    <property type="entry name" value="UPF0301 PROTEIN YQGE"/>
    <property type="match status" value="1"/>
</dbReference>
<dbReference type="Pfam" id="PF02622">
    <property type="entry name" value="DUF179"/>
    <property type="match status" value="1"/>
</dbReference>
<dbReference type="SUPFAM" id="SSF143456">
    <property type="entry name" value="VC0467-like"/>
    <property type="match status" value="1"/>
</dbReference>